<feature type="chain" id="PRO_1000185663" description="UPF0502 protein YceH">
    <location>
        <begin position="1"/>
        <end position="215"/>
    </location>
</feature>
<feature type="modified residue" description="N6-acetyllysine" evidence="1">
    <location>
        <position position="80"/>
    </location>
</feature>
<name>YCEH_ECO55</name>
<organism>
    <name type="scientific">Escherichia coli (strain 55989 / EAEC)</name>
    <dbReference type="NCBI Taxonomy" id="585055"/>
    <lineage>
        <taxon>Bacteria</taxon>
        <taxon>Pseudomonadati</taxon>
        <taxon>Pseudomonadota</taxon>
        <taxon>Gammaproteobacteria</taxon>
        <taxon>Enterobacterales</taxon>
        <taxon>Enterobacteriaceae</taxon>
        <taxon>Escherichia</taxon>
    </lineage>
</organism>
<sequence>MKYQLTALEARVIGCLLEKQVTTPEQYPLSVNGVVTACNQKTNREPVMNLSESEVQEQLDNLVKRHYLRTVSGFGNRVTKYEQRFCNSEFGDLKLSAAEVALITTLLLRGAQTPGELRSRAARMYEFSDMAEVESTLEQLANREDGPFVVRLAREPGKRESRYMHLFSGEVEDQPAVTDMSNAVDGDLQARVEALEIEVAELKQRLDSLLAHLGD</sequence>
<proteinExistence type="inferred from homology"/>
<protein>
    <recommendedName>
        <fullName evidence="1">UPF0502 protein YceH</fullName>
    </recommendedName>
</protein>
<keyword id="KW-0007">Acetylation</keyword>
<keyword id="KW-1185">Reference proteome</keyword>
<dbReference type="EMBL" id="CU928145">
    <property type="protein sequence ID" value="CAU97039.1"/>
    <property type="molecule type" value="Genomic_DNA"/>
</dbReference>
<dbReference type="RefSeq" id="WP_000877116.1">
    <property type="nucleotide sequence ID" value="NC_011748.1"/>
</dbReference>
<dbReference type="SMR" id="B7LG01"/>
<dbReference type="KEGG" id="eck:EC55989_1180"/>
<dbReference type="HOGENOM" id="CLU_057831_2_0_6"/>
<dbReference type="Proteomes" id="UP000000746">
    <property type="component" value="Chromosome"/>
</dbReference>
<dbReference type="FunFam" id="1.10.10.10:FF:000196">
    <property type="entry name" value="UPF0502 protein YceH"/>
    <property type="match status" value="1"/>
</dbReference>
<dbReference type="FunFam" id="1.10.10.10:FF:000241">
    <property type="entry name" value="UPF0502 protein YceH"/>
    <property type="match status" value="1"/>
</dbReference>
<dbReference type="Gene3D" id="1.10.10.10">
    <property type="entry name" value="Winged helix-like DNA-binding domain superfamily/Winged helix DNA-binding domain"/>
    <property type="match status" value="2"/>
</dbReference>
<dbReference type="HAMAP" id="MF_01584">
    <property type="entry name" value="UPF0502"/>
    <property type="match status" value="1"/>
</dbReference>
<dbReference type="InterPro" id="IPR007432">
    <property type="entry name" value="DUF480"/>
</dbReference>
<dbReference type="InterPro" id="IPR036388">
    <property type="entry name" value="WH-like_DNA-bd_sf"/>
</dbReference>
<dbReference type="InterPro" id="IPR036390">
    <property type="entry name" value="WH_DNA-bd_sf"/>
</dbReference>
<dbReference type="NCBIfam" id="NF008413">
    <property type="entry name" value="PRK11239.1"/>
    <property type="match status" value="1"/>
</dbReference>
<dbReference type="PANTHER" id="PTHR38768">
    <property type="entry name" value="UPF0502 PROTEIN YCEH"/>
    <property type="match status" value="1"/>
</dbReference>
<dbReference type="PANTHER" id="PTHR38768:SF1">
    <property type="entry name" value="UPF0502 PROTEIN YCEH"/>
    <property type="match status" value="1"/>
</dbReference>
<dbReference type="Pfam" id="PF04337">
    <property type="entry name" value="DUF480"/>
    <property type="match status" value="1"/>
</dbReference>
<dbReference type="SUPFAM" id="SSF46785">
    <property type="entry name" value="Winged helix' DNA-binding domain"/>
    <property type="match status" value="2"/>
</dbReference>
<reference key="1">
    <citation type="journal article" date="2009" name="PLoS Genet.">
        <title>Organised genome dynamics in the Escherichia coli species results in highly diverse adaptive paths.</title>
        <authorList>
            <person name="Touchon M."/>
            <person name="Hoede C."/>
            <person name="Tenaillon O."/>
            <person name="Barbe V."/>
            <person name="Baeriswyl S."/>
            <person name="Bidet P."/>
            <person name="Bingen E."/>
            <person name="Bonacorsi S."/>
            <person name="Bouchier C."/>
            <person name="Bouvet O."/>
            <person name="Calteau A."/>
            <person name="Chiapello H."/>
            <person name="Clermont O."/>
            <person name="Cruveiller S."/>
            <person name="Danchin A."/>
            <person name="Diard M."/>
            <person name="Dossat C."/>
            <person name="Karoui M.E."/>
            <person name="Frapy E."/>
            <person name="Garry L."/>
            <person name="Ghigo J.M."/>
            <person name="Gilles A.M."/>
            <person name="Johnson J."/>
            <person name="Le Bouguenec C."/>
            <person name="Lescat M."/>
            <person name="Mangenot S."/>
            <person name="Martinez-Jehanne V."/>
            <person name="Matic I."/>
            <person name="Nassif X."/>
            <person name="Oztas S."/>
            <person name="Petit M.A."/>
            <person name="Pichon C."/>
            <person name="Rouy Z."/>
            <person name="Ruf C.S."/>
            <person name="Schneider D."/>
            <person name="Tourret J."/>
            <person name="Vacherie B."/>
            <person name="Vallenet D."/>
            <person name="Medigue C."/>
            <person name="Rocha E.P.C."/>
            <person name="Denamur E."/>
        </authorList>
    </citation>
    <scope>NUCLEOTIDE SEQUENCE [LARGE SCALE GENOMIC DNA]</scope>
    <source>
        <strain>55989 / EAEC</strain>
    </source>
</reference>
<evidence type="ECO:0000255" key="1">
    <source>
        <dbReference type="HAMAP-Rule" id="MF_01584"/>
    </source>
</evidence>
<comment type="similarity">
    <text evidence="1">Belongs to the UPF0502 family.</text>
</comment>
<accession>B7LG01</accession>
<gene>
    <name evidence="1" type="primary">yceH</name>
    <name type="ordered locus">EC55989_1180</name>
</gene>